<organism>
    <name type="scientific">Colorado tick fever virus (strain USA/Florio N-7180)</name>
    <name type="common">CTFV</name>
    <dbReference type="NCBI Taxonomy" id="648168"/>
    <lineage>
        <taxon>Viruses</taxon>
        <taxon>Riboviria</taxon>
        <taxon>Orthornavirae</taxon>
        <taxon>Duplornaviricota</taxon>
        <taxon>Resentoviricetes</taxon>
        <taxon>Reovirales</taxon>
        <taxon>Spinareoviridae</taxon>
        <taxon>Coltivirus</taxon>
        <taxon>Colorado tick fever coltivirus</taxon>
    </lineage>
</organism>
<organismHost>
    <name type="scientific">Callospermophilus lateralis</name>
    <name type="common">Golden-mantled ground squirrel</name>
    <name type="synonym">Spermophilus lateralis</name>
    <dbReference type="NCBI Taxonomy" id="76772"/>
</organismHost>
<organismHost>
    <name type="scientific">Dermacentor andersoni</name>
    <name type="common">Rocky mountain wood tick</name>
    <dbReference type="NCBI Taxonomy" id="34620"/>
</organismHost>
<organismHost>
    <name type="scientific">Erethizon dorsatum</name>
    <name type="common">North American porcupine</name>
    <name type="synonym">Hystrix dorsata</name>
    <dbReference type="NCBI Taxonomy" id="34844"/>
</organismHost>
<organismHost>
    <name type="scientific">Homo sapiens</name>
    <name type="common">Human</name>
    <dbReference type="NCBI Taxonomy" id="9606"/>
</organismHost>
<organismHost>
    <name type="scientific">Neotoma cinerea</name>
    <name type="common">Bushy-tailed woodrat</name>
    <name type="synonym">Mus cinereus</name>
    <dbReference type="NCBI Taxonomy" id="105147"/>
</organismHost>
<organismHost>
    <name type="scientific">Peromyscus maniculatus</name>
    <name type="common">North American deer mouse</name>
    <dbReference type="NCBI Taxonomy" id="10042"/>
</organismHost>
<accession>Q96713</accession>
<dbReference type="EMBL" id="U72694">
    <property type="protein sequence ID" value="AAB88234.1"/>
    <property type="molecule type" value="Genomic_RNA"/>
</dbReference>
<dbReference type="RefSeq" id="NP_690901.1">
    <property type="nucleotide sequence ID" value="NC_004191.1"/>
</dbReference>
<dbReference type="SMR" id="Q96713"/>
<dbReference type="GeneID" id="993319"/>
<dbReference type="KEGG" id="vg:993319"/>
<dbReference type="Proteomes" id="UP000001675">
    <property type="component" value="Genome"/>
</dbReference>
<name>VP11_CTFVL</name>
<sequence>MPALAIIGDTLLNASLIDKYTPPSSNAQNQGFTTYVHSVKPLIPQIIGIPEDALKQWTLFTDWAKLNDIDLNADETFKEILTIGKRLVSGDITQFVYRQFRGKLEVGYFGKTDNVREKPSFFPLLGAGQIESLKDLLSRHFEVWVYFAPKPVIDWMIRHEIDLATVEFDVRNMLKMLSNNPIKWETLLEKIANVAESRITADRDEVGEWRPWVIGLLMIFGQSLKIGGLMAVLKWRQLGPVCYRNLSRV</sequence>
<protein>
    <recommendedName>
        <fullName>Uncharacterized protein VP11</fullName>
    </recommendedName>
</protein>
<keyword id="KW-1185">Reference proteome</keyword>
<reference key="1">
    <citation type="journal article" date="1997" name="J. Gen. Virol.">
        <title>Complete nucleotide sequence of Colorado tick fever virus segments M6, S1 and S2.</title>
        <authorList>
            <person name="Attoui H."/>
            <person name="De Micco P."/>
            <person name="de Lamballerie X."/>
        </authorList>
    </citation>
    <scope>NUCLEOTIDE SEQUENCE [GENOMIC RNA]</scope>
</reference>
<proteinExistence type="predicted"/>
<feature type="chain" id="PRO_0000403200" description="Uncharacterized protein VP11">
    <location>
        <begin position="1"/>
        <end position="249"/>
    </location>
</feature>